<comment type="function">
    <text evidence="1">Key enzyme in the regulation of glycerol uptake and metabolism. Catalyzes the phosphorylation of glycerol to yield sn-glycerol 3-phosphate.</text>
</comment>
<comment type="catalytic activity">
    <reaction evidence="1">
        <text>glycerol + ATP = sn-glycerol 3-phosphate + ADP + H(+)</text>
        <dbReference type="Rhea" id="RHEA:21644"/>
        <dbReference type="ChEBI" id="CHEBI:15378"/>
        <dbReference type="ChEBI" id="CHEBI:17754"/>
        <dbReference type="ChEBI" id="CHEBI:30616"/>
        <dbReference type="ChEBI" id="CHEBI:57597"/>
        <dbReference type="ChEBI" id="CHEBI:456216"/>
        <dbReference type="EC" id="2.7.1.30"/>
    </reaction>
</comment>
<comment type="activity regulation">
    <text evidence="1">Inhibited by fructose 1,6-bisphosphate (FBP).</text>
</comment>
<comment type="pathway">
    <text evidence="1">Polyol metabolism; glycerol degradation via glycerol kinase pathway; sn-glycerol 3-phosphate from glycerol: step 1/1.</text>
</comment>
<comment type="similarity">
    <text evidence="1">Belongs to the FGGY kinase family.</text>
</comment>
<feature type="chain" id="PRO_1000077418" description="Glycerol kinase">
    <location>
        <begin position="1"/>
        <end position="499"/>
    </location>
</feature>
<feature type="binding site" evidence="1">
    <location>
        <position position="13"/>
    </location>
    <ligand>
        <name>ADP</name>
        <dbReference type="ChEBI" id="CHEBI:456216"/>
    </ligand>
</feature>
<feature type="binding site" evidence="1">
    <location>
        <position position="13"/>
    </location>
    <ligand>
        <name>ATP</name>
        <dbReference type="ChEBI" id="CHEBI:30616"/>
    </ligand>
</feature>
<feature type="binding site" evidence="1">
    <location>
        <position position="13"/>
    </location>
    <ligand>
        <name>sn-glycerol 3-phosphate</name>
        <dbReference type="ChEBI" id="CHEBI:57597"/>
    </ligand>
</feature>
<feature type="binding site" evidence="1">
    <location>
        <position position="14"/>
    </location>
    <ligand>
        <name>ATP</name>
        <dbReference type="ChEBI" id="CHEBI:30616"/>
    </ligand>
</feature>
<feature type="binding site" evidence="1">
    <location>
        <position position="15"/>
    </location>
    <ligand>
        <name>ATP</name>
        <dbReference type="ChEBI" id="CHEBI:30616"/>
    </ligand>
</feature>
<feature type="binding site" evidence="1">
    <location>
        <position position="17"/>
    </location>
    <ligand>
        <name>ADP</name>
        <dbReference type="ChEBI" id="CHEBI:456216"/>
    </ligand>
</feature>
<feature type="binding site" evidence="1">
    <location>
        <position position="83"/>
    </location>
    <ligand>
        <name>glycerol</name>
        <dbReference type="ChEBI" id="CHEBI:17754"/>
    </ligand>
</feature>
<feature type="binding site" evidence="1">
    <location>
        <position position="83"/>
    </location>
    <ligand>
        <name>sn-glycerol 3-phosphate</name>
        <dbReference type="ChEBI" id="CHEBI:57597"/>
    </ligand>
</feature>
<feature type="binding site" evidence="1">
    <location>
        <position position="84"/>
    </location>
    <ligand>
        <name>glycerol</name>
        <dbReference type="ChEBI" id="CHEBI:17754"/>
    </ligand>
</feature>
<feature type="binding site" evidence="1">
    <location>
        <position position="84"/>
    </location>
    <ligand>
        <name>sn-glycerol 3-phosphate</name>
        <dbReference type="ChEBI" id="CHEBI:57597"/>
    </ligand>
</feature>
<feature type="binding site" evidence="1">
    <location>
        <position position="136"/>
    </location>
    <ligand>
        <name>glycerol</name>
        <dbReference type="ChEBI" id="CHEBI:17754"/>
    </ligand>
</feature>
<feature type="binding site" evidence="1">
    <location>
        <position position="136"/>
    </location>
    <ligand>
        <name>sn-glycerol 3-phosphate</name>
        <dbReference type="ChEBI" id="CHEBI:57597"/>
    </ligand>
</feature>
<feature type="binding site" evidence="1">
    <location>
        <position position="246"/>
    </location>
    <ligand>
        <name>glycerol</name>
        <dbReference type="ChEBI" id="CHEBI:17754"/>
    </ligand>
</feature>
<feature type="binding site" evidence="1">
    <location>
        <position position="246"/>
    </location>
    <ligand>
        <name>sn-glycerol 3-phosphate</name>
        <dbReference type="ChEBI" id="CHEBI:57597"/>
    </ligand>
</feature>
<feature type="binding site" evidence="1">
    <location>
        <position position="247"/>
    </location>
    <ligand>
        <name>glycerol</name>
        <dbReference type="ChEBI" id="CHEBI:17754"/>
    </ligand>
</feature>
<feature type="binding site" evidence="1">
    <location>
        <position position="268"/>
    </location>
    <ligand>
        <name>ADP</name>
        <dbReference type="ChEBI" id="CHEBI:456216"/>
    </ligand>
</feature>
<feature type="binding site" evidence="1">
    <location>
        <position position="268"/>
    </location>
    <ligand>
        <name>ATP</name>
        <dbReference type="ChEBI" id="CHEBI:30616"/>
    </ligand>
</feature>
<feature type="binding site" evidence="1">
    <location>
        <position position="311"/>
    </location>
    <ligand>
        <name>ADP</name>
        <dbReference type="ChEBI" id="CHEBI:456216"/>
    </ligand>
</feature>
<feature type="binding site" evidence="1">
    <location>
        <position position="311"/>
    </location>
    <ligand>
        <name>ATP</name>
        <dbReference type="ChEBI" id="CHEBI:30616"/>
    </ligand>
</feature>
<feature type="binding site" evidence="1">
    <location>
        <position position="315"/>
    </location>
    <ligand>
        <name>ATP</name>
        <dbReference type="ChEBI" id="CHEBI:30616"/>
    </ligand>
</feature>
<feature type="binding site" evidence="1">
    <location>
        <position position="412"/>
    </location>
    <ligand>
        <name>ADP</name>
        <dbReference type="ChEBI" id="CHEBI:456216"/>
    </ligand>
</feature>
<feature type="binding site" evidence="1">
    <location>
        <position position="412"/>
    </location>
    <ligand>
        <name>ATP</name>
        <dbReference type="ChEBI" id="CHEBI:30616"/>
    </ligand>
</feature>
<feature type="binding site" evidence="1">
    <location>
        <position position="416"/>
    </location>
    <ligand>
        <name>ADP</name>
        <dbReference type="ChEBI" id="CHEBI:456216"/>
    </ligand>
</feature>
<name>GLPK_FRAP2</name>
<dbReference type="EC" id="2.7.1.30" evidence="1"/>
<dbReference type="EMBL" id="CP000937">
    <property type="protein sequence ID" value="ABZ87255.1"/>
    <property type="molecule type" value="Genomic_DNA"/>
</dbReference>
<dbReference type="SMR" id="B0TWZ7"/>
<dbReference type="KEGG" id="fph:Fphi_1033"/>
<dbReference type="eggNOG" id="COG0554">
    <property type="taxonomic scope" value="Bacteria"/>
</dbReference>
<dbReference type="HOGENOM" id="CLU_009281_2_3_6"/>
<dbReference type="UniPathway" id="UPA00618">
    <property type="reaction ID" value="UER00672"/>
</dbReference>
<dbReference type="GO" id="GO:0005829">
    <property type="term" value="C:cytosol"/>
    <property type="evidence" value="ECO:0007669"/>
    <property type="project" value="TreeGrafter"/>
</dbReference>
<dbReference type="GO" id="GO:0005524">
    <property type="term" value="F:ATP binding"/>
    <property type="evidence" value="ECO:0007669"/>
    <property type="project" value="UniProtKB-UniRule"/>
</dbReference>
<dbReference type="GO" id="GO:0004370">
    <property type="term" value="F:glycerol kinase activity"/>
    <property type="evidence" value="ECO:0000250"/>
    <property type="project" value="UniProtKB"/>
</dbReference>
<dbReference type="GO" id="GO:0019563">
    <property type="term" value="P:glycerol catabolic process"/>
    <property type="evidence" value="ECO:0007669"/>
    <property type="project" value="UniProtKB-UniRule"/>
</dbReference>
<dbReference type="GO" id="GO:0006071">
    <property type="term" value="P:glycerol metabolic process"/>
    <property type="evidence" value="ECO:0000250"/>
    <property type="project" value="UniProtKB"/>
</dbReference>
<dbReference type="GO" id="GO:0006072">
    <property type="term" value="P:glycerol-3-phosphate metabolic process"/>
    <property type="evidence" value="ECO:0007669"/>
    <property type="project" value="InterPro"/>
</dbReference>
<dbReference type="CDD" id="cd07786">
    <property type="entry name" value="FGGY_EcGK_like"/>
    <property type="match status" value="1"/>
</dbReference>
<dbReference type="FunFam" id="3.30.420.40:FF:000007">
    <property type="entry name" value="Glycerol kinase"/>
    <property type="match status" value="1"/>
</dbReference>
<dbReference type="FunFam" id="3.30.420.40:FF:000008">
    <property type="entry name" value="Glycerol kinase"/>
    <property type="match status" value="1"/>
</dbReference>
<dbReference type="Gene3D" id="3.30.420.40">
    <property type="match status" value="2"/>
</dbReference>
<dbReference type="HAMAP" id="MF_00186">
    <property type="entry name" value="Glycerol_kin"/>
    <property type="match status" value="1"/>
</dbReference>
<dbReference type="InterPro" id="IPR043129">
    <property type="entry name" value="ATPase_NBD"/>
</dbReference>
<dbReference type="InterPro" id="IPR000577">
    <property type="entry name" value="Carb_kinase_FGGY"/>
</dbReference>
<dbReference type="InterPro" id="IPR018483">
    <property type="entry name" value="Carb_kinase_FGGY_CS"/>
</dbReference>
<dbReference type="InterPro" id="IPR018485">
    <property type="entry name" value="FGGY_C"/>
</dbReference>
<dbReference type="InterPro" id="IPR018484">
    <property type="entry name" value="FGGY_N"/>
</dbReference>
<dbReference type="InterPro" id="IPR005999">
    <property type="entry name" value="Glycerol_kin"/>
</dbReference>
<dbReference type="NCBIfam" id="TIGR01311">
    <property type="entry name" value="glycerol_kin"/>
    <property type="match status" value="1"/>
</dbReference>
<dbReference type="NCBIfam" id="NF000756">
    <property type="entry name" value="PRK00047.1"/>
    <property type="match status" value="1"/>
</dbReference>
<dbReference type="PANTHER" id="PTHR10196:SF69">
    <property type="entry name" value="GLYCEROL KINASE"/>
    <property type="match status" value="1"/>
</dbReference>
<dbReference type="PANTHER" id="PTHR10196">
    <property type="entry name" value="SUGAR KINASE"/>
    <property type="match status" value="1"/>
</dbReference>
<dbReference type="Pfam" id="PF02782">
    <property type="entry name" value="FGGY_C"/>
    <property type="match status" value="1"/>
</dbReference>
<dbReference type="Pfam" id="PF00370">
    <property type="entry name" value="FGGY_N"/>
    <property type="match status" value="1"/>
</dbReference>
<dbReference type="PIRSF" id="PIRSF000538">
    <property type="entry name" value="GlpK"/>
    <property type="match status" value="1"/>
</dbReference>
<dbReference type="SUPFAM" id="SSF53067">
    <property type="entry name" value="Actin-like ATPase domain"/>
    <property type="match status" value="2"/>
</dbReference>
<dbReference type="PROSITE" id="PS00933">
    <property type="entry name" value="FGGY_KINASES_1"/>
    <property type="match status" value="1"/>
</dbReference>
<dbReference type="PROSITE" id="PS00445">
    <property type="entry name" value="FGGY_KINASES_2"/>
    <property type="match status" value="1"/>
</dbReference>
<keyword id="KW-0067">ATP-binding</keyword>
<keyword id="KW-0319">Glycerol metabolism</keyword>
<keyword id="KW-0418">Kinase</keyword>
<keyword id="KW-0547">Nucleotide-binding</keyword>
<keyword id="KW-0808">Transferase</keyword>
<evidence type="ECO:0000255" key="1">
    <source>
        <dbReference type="HAMAP-Rule" id="MF_00186"/>
    </source>
</evidence>
<reference key="1">
    <citation type="submission" date="2007-12" db="EMBL/GenBank/DDBJ databases">
        <title>Complete sequence of chromosome of Francisella philomiragia subsp. philomiragia ATCC 25017.</title>
        <authorList>
            <consortium name="US DOE Joint Genome Institute"/>
            <person name="Copeland A."/>
            <person name="Lucas S."/>
            <person name="Lapidus A."/>
            <person name="Barry K."/>
            <person name="Detter J.C."/>
            <person name="Glavina del Rio T."/>
            <person name="Hammon N."/>
            <person name="Israni S."/>
            <person name="Dalin E."/>
            <person name="Tice H."/>
            <person name="Pitluck S."/>
            <person name="Chain P."/>
            <person name="Malfatti S."/>
            <person name="Shin M."/>
            <person name="Vergez L."/>
            <person name="Schmutz J."/>
            <person name="Larimer F."/>
            <person name="Land M."/>
            <person name="Hauser L."/>
            <person name="Richardson P."/>
        </authorList>
    </citation>
    <scope>NUCLEOTIDE SEQUENCE [LARGE SCALE GENOMIC DNA]</scope>
    <source>
        <strain>ATCC 25017 / CCUG 19701 / FSC 153 / O#319-036</strain>
    </source>
</reference>
<accession>B0TWZ7</accession>
<sequence length="499" mass="55586">MSKQFILAIDQGTTSSRAIIFDKKGNIKKIAQKEFTQIYPKSGWVEHDPMEIWASQSSIVREALEYARVSPRDIAAIGITNQRETTVVWDKNTGQPVYNAIVWQCRRTSHICDEINKNEDLKKYIRKNTGLIVDAYFSATKIKWILDNVDGAREKAEKGDLLFGTIDTWLIWNLTKGEVHATDFSNASRTMLFNINTLEWDKKILEYLDIPVSMLPEVRSSSGDFGHTHPSTLGGARIPIAGVAGDQQSALFGHCCFEEGMAKNTYGTGCFALMNVGDKPVFSDAGLLTTIAWAEDGKPTYALEGSVFIAGAVIQWIRDGLGLVRSAEDSEYYATKIDSTDGVYLVPAFVGLGTPYWDMYARGTIVGITRDTRREHIIRAALEAIAYQAKDVLDCMKEDTGLDWAGLRVDGGAVQNNFLMQFQSDILQSEISKPKINEITGLGAVFLAGLAVGFWKDKEELKTILTTEKTFEPKKDPETVAHDYKGWKKAVQRSMAWAE</sequence>
<proteinExistence type="inferred from homology"/>
<gene>
    <name evidence="1" type="primary">glpK</name>
    <name type="ordered locus">Fphi_1033</name>
</gene>
<organism>
    <name type="scientific">Francisella philomiragia subsp. philomiragia (strain ATCC 25017 / CCUG 19701 / FSC 153 / O#319-036)</name>
    <dbReference type="NCBI Taxonomy" id="484022"/>
    <lineage>
        <taxon>Bacteria</taxon>
        <taxon>Pseudomonadati</taxon>
        <taxon>Pseudomonadota</taxon>
        <taxon>Gammaproteobacteria</taxon>
        <taxon>Thiotrichales</taxon>
        <taxon>Francisellaceae</taxon>
        <taxon>Francisella</taxon>
    </lineage>
</organism>
<protein>
    <recommendedName>
        <fullName evidence="1">Glycerol kinase</fullName>
        <ecNumber evidence="1">2.7.1.30</ecNumber>
    </recommendedName>
    <alternativeName>
        <fullName evidence="1">ATP:glycerol 3-phosphotransferase</fullName>
    </alternativeName>
    <alternativeName>
        <fullName evidence="1">Glycerokinase</fullName>
        <shortName evidence="1">GK</shortName>
    </alternativeName>
</protein>